<organism>
    <name type="scientific">Mesorhizobium japonicum (strain LMG 29417 / CECT 9101 / MAFF 303099)</name>
    <name type="common">Mesorhizobium loti (strain MAFF 303099)</name>
    <dbReference type="NCBI Taxonomy" id="266835"/>
    <lineage>
        <taxon>Bacteria</taxon>
        <taxon>Pseudomonadati</taxon>
        <taxon>Pseudomonadota</taxon>
        <taxon>Alphaproteobacteria</taxon>
        <taxon>Hyphomicrobiales</taxon>
        <taxon>Phyllobacteriaceae</taxon>
        <taxon>Mesorhizobium</taxon>
    </lineage>
</organism>
<keyword id="KW-0413">Isomerase</keyword>
<keyword id="KW-0663">Pyridoxal phosphate</keyword>
<name>ALR2_RHILO</name>
<dbReference type="EC" id="5.1.1.1"/>
<dbReference type="EMBL" id="BA000012">
    <property type="protein sequence ID" value="BAB50762.1"/>
    <property type="molecule type" value="Genomic_DNA"/>
</dbReference>
<dbReference type="RefSeq" id="WP_010912105.1">
    <property type="nucleotide sequence ID" value="NC_002678.2"/>
</dbReference>
<dbReference type="SMR" id="Q98F05"/>
<dbReference type="KEGG" id="mlo:mll3997"/>
<dbReference type="PATRIC" id="fig|266835.9.peg.3173"/>
<dbReference type="eggNOG" id="COG0787">
    <property type="taxonomic scope" value="Bacteria"/>
</dbReference>
<dbReference type="HOGENOM" id="CLU_028393_1_1_5"/>
<dbReference type="Proteomes" id="UP000000552">
    <property type="component" value="Chromosome"/>
</dbReference>
<dbReference type="GO" id="GO:0005829">
    <property type="term" value="C:cytosol"/>
    <property type="evidence" value="ECO:0007669"/>
    <property type="project" value="TreeGrafter"/>
</dbReference>
<dbReference type="GO" id="GO:0008784">
    <property type="term" value="F:alanine racemase activity"/>
    <property type="evidence" value="ECO:0007669"/>
    <property type="project" value="UniProtKB-UniRule"/>
</dbReference>
<dbReference type="GO" id="GO:0030170">
    <property type="term" value="F:pyridoxal phosphate binding"/>
    <property type="evidence" value="ECO:0007669"/>
    <property type="project" value="UniProtKB-UniRule"/>
</dbReference>
<dbReference type="GO" id="GO:0030632">
    <property type="term" value="P:D-alanine biosynthetic process"/>
    <property type="evidence" value="ECO:0007669"/>
    <property type="project" value="UniProtKB-UniRule"/>
</dbReference>
<dbReference type="CDD" id="cd00430">
    <property type="entry name" value="PLPDE_III_AR"/>
    <property type="match status" value="1"/>
</dbReference>
<dbReference type="Gene3D" id="3.20.20.10">
    <property type="entry name" value="Alanine racemase"/>
    <property type="match status" value="1"/>
</dbReference>
<dbReference type="Gene3D" id="2.40.37.10">
    <property type="entry name" value="Lyase, Ornithine Decarboxylase, Chain A, domain 1"/>
    <property type="match status" value="1"/>
</dbReference>
<dbReference type="HAMAP" id="MF_01201">
    <property type="entry name" value="Ala_racemase"/>
    <property type="match status" value="1"/>
</dbReference>
<dbReference type="InterPro" id="IPR000821">
    <property type="entry name" value="Ala_racemase"/>
</dbReference>
<dbReference type="InterPro" id="IPR009006">
    <property type="entry name" value="Ala_racemase/Decarboxylase_C"/>
</dbReference>
<dbReference type="InterPro" id="IPR011079">
    <property type="entry name" value="Ala_racemase_C"/>
</dbReference>
<dbReference type="InterPro" id="IPR001608">
    <property type="entry name" value="Ala_racemase_N"/>
</dbReference>
<dbReference type="InterPro" id="IPR020622">
    <property type="entry name" value="Ala_racemase_pyridoxalP-BS"/>
</dbReference>
<dbReference type="InterPro" id="IPR029066">
    <property type="entry name" value="PLP-binding_barrel"/>
</dbReference>
<dbReference type="NCBIfam" id="TIGR00492">
    <property type="entry name" value="alr"/>
    <property type="match status" value="1"/>
</dbReference>
<dbReference type="PANTHER" id="PTHR30511">
    <property type="entry name" value="ALANINE RACEMASE"/>
    <property type="match status" value="1"/>
</dbReference>
<dbReference type="PANTHER" id="PTHR30511:SF0">
    <property type="entry name" value="ALANINE RACEMASE, CATABOLIC-RELATED"/>
    <property type="match status" value="1"/>
</dbReference>
<dbReference type="Pfam" id="PF00842">
    <property type="entry name" value="Ala_racemase_C"/>
    <property type="match status" value="1"/>
</dbReference>
<dbReference type="Pfam" id="PF01168">
    <property type="entry name" value="Ala_racemase_N"/>
    <property type="match status" value="1"/>
</dbReference>
<dbReference type="PRINTS" id="PR00992">
    <property type="entry name" value="ALARACEMASE"/>
</dbReference>
<dbReference type="SMART" id="SM01005">
    <property type="entry name" value="Ala_racemase_C"/>
    <property type="match status" value="1"/>
</dbReference>
<dbReference type="SUPFAM" id="SSF50621">
    <property type="entry name" value="Alanine racemase C-terminal domain-like"/>
    <property type="match status" value="1"/>
</dbReference>
<dbReference type="SUPFAM" id="SSF51419">
    <property type="entry name" value="PLP-binding barrel"/>
    <property type="match status" value="1"/>
</dbReference>
<dbReference type="PROSITE" id="PS00395">
    <property type="entry name" value="ALANINE_RACEMASE"/>
    <property type="match status" value="1"/>
</dbReference>
<protein>
    <recommendedName>
        <fullName>Alanine racemase, catabolic</fullName>
        <ecNumber>5.1.1.1</ecNumber>
    </recommendedName>
</protein>
<comment type="function">
    <text evidence="1">Isomerizes L-alanine to D-alanine which is then oxidized to pyruvate by DadA.</text>
</comment>
<comment type="catalytic activity">
    <reaction>
        <text>L-alanine = D-alanine</text>
        <dbReference type="Rhea" id="RHEA:20249"/>
        <dbReference type="ChEBI" id="CHEBI:57416"/>
        <dbReference type="ChEBI" id="CHEBI:57972"/>
        <dbReference type="EC" id="5.1.1.1"/>
    </reaction>
</comment>
<comment type="cofactor">
    <cofactor evidence="1">
        <name>pyridoxal 5'-phosphate</name>
        <dbReference type="ChEBI" id="CHEBI:597326"/>
    </cofactor>
</comment>
<comment type="similarity">
    <text evidence="2">Belongs to the alanine racemase family.</text>
</comment>
<proteinExistence type="inferred from homology"/>
<gene>
    <name type="primary">dadB</name>
    <name type="ordered locus">mll3997</name>
</gene>
<reference key="1">
    <citation type="journal article" date="2000" name="DNA Res.">
        <title>Complete genome structure of the nitrogen-fixing symbiotic bacterium Mesorhizobium loti.</title>
        <authorList>
            <person name="Kaneko T."/>
            <person name="Nakamura Y."/>
            <person name="Sato S."/>
            <person name="Asamizu E."/>
            <person name="Kato T."/>
            <person name="Sasamoto S."/>
            <person name="Watanabe A."/>
            <person name="Idesawa K."/>
            <person name="Ishikawa A."/>
            <person name="Kawashima K."/>
            <person name="Kimura T."/>
            <person name="Kishida Y."/>
            <person name="Kiyokawa C."/>
            <person name="Kohara M."/>
            <person name="Matsumoto M."/>
            <person name="Matsuno A."/>
            <person name="Mochizuki Y."/>
            <person name="Nakayama S."/>
            <person name="Nakazaki N."/>
            <person name="Shimpo S."/>
            <person name="Sugimoto M."/>
            <person name="Takeuchi C."/>
            <person name="Yamada M."/>
            <person name="Tabata S."/>
        </authorList>
    </citation>
    <scope>NUCLEOTIDE SEQUENCE [LARGE SCALE GENOMIC DNA]</scope>
    <source>
        <strain>LMG 29417 / CECT 9101 / MAFF 303099</strain>
    </source>
</reference>
<evidence type="ECO:0000250" key="1"/>
<evidence type="ECO:0000305" key="2"/>
<feature type="chain" id="PRO_0000114552" description="Alanine racemase, catabolic">
    <location>
        <begin position="1"/>
        <end position="381"/>
    </location>
</feature>
<feature type="active site" description="Proton acceptor; specific for D-alanine" evidence="1">
    <location>
        <position position="55"/>
    </location>
</feature>
<feature type="active site" description="Proton acceptor; specific for L-alanine" evidence="1">
    <location>
        <position position="276"/>
    </location>
</feature>
<feature type="binding site" evidence="1">
    <location>
        <position position="154"/>
    </location>
    <ligand>
        <name>substrate</name>
    </ligand>
</feature>
<feature type="binding site" evidence="1">
    <location>
        <position position="322"/>
    </location>
    <ligand>
        <name>substrate</name>
    </ligand>
</feature>
<feature type="modified residue" description="N6-(pyridoxal phosphate)lysine" evidence="1">
    <location>
        <position position="55"/>
    </location>
</feature>
<sequence length="381" mass="39784">MNDAVNPTAAKTVTGWPVSEAAAGAILTIDLGAIRENYRRLKALLGGVHCAGVVKANGYGLGAAKVAAALTREGCDIFFVALLAEGIALRKAVGTGPDIYVLNGLPPGSEPEAVAAGLCAVINSGAQLKAWRAAVHDAGRRLPAAIQVDSGMSRLGMAPAEVEALAGDSSAFDGIDIKYVMSHLACADEPRHPANEQQRLAFERLRAMLPRAPASLANSSGIFLGPSYHHDLARPGAALYGINPTPGEPNPMLPVVWLQAKVAQTRRIEKGAGIGYGHSYHADGPLSLATISFGYADGWLRRSASAAWFEGVRLPFLGRVSMDSIILDISALPPGRLREGDLVELLGPSQSVDDAAGHAGTIGYEILASLGPRFHRHYVGG</sequence>
<accession>Q98F05</accession>